<proteinExistence type="inferred from homology"/>
<comment type="function">
    <text evidence="1">Plays a critical role in the incorporation of lipoproteins in the outer membrane after they are released by the LolA protein.</text>
</comment>
<comment type="subunit">
    <text evidence="1">Monomer.</text>
</comment>
<comment type="subcellular location">
    <subcellularLocation>
        <location evidence="1">Cell outer membrane</location>
        <topology evidence="1">Lipid-anchor</topology>
    </subcellularLocation>
</comment>
<comment type="similarity">
    <text evidence="1">Belongs to the LolB family.</text>
</comment>
<name>LOLB_PSEPF</name>
<protein>
    <recommendedName>
        <fullName evidence="1">Outer-membrane lipoprotein LolB</fullName>
    </recommendedName>
</protein>
<gene>
    <name evidence="1" type="primary">lolB</name>
    <name type="ordered locus">Pfl01_4751</name>
</gene>
<evidence type="ECO:0000255" key="1">
    <source>
        <dbReference type="HAMAP-Rule" id="MF_00233"/>
    </source>
</evidence>
<feature type="signal peptide" evidence="1">
    <location>
        <begin position="1"/>
        <end position="17"/>
    </location>
</feature>
<feature type="chain" id="PRO_1000021671" description="Outer-membrane lipoprotein LolB">
    <location>
        <begin position="18"/>
        <end position="205"/>
    </location>
</feature>
<feature type="lipid moiety-binding region" description="N-palmitoyl cysteine" evidence="1">
    <location>
        <position position="18"/>
    </location>
</feature>
<feature type="lipid moiety-binding region" description="S-diacylglycerol cysteine" evidence="1">
    <location>
        <position position="18"/>
    </location>
</feature>
<accession>Q3K6W6</accession>
<dbReference type="EMBL" id="CP000094">
    <property type="protein sequence ID" value="ABA76488.1"/>
    <property type="molecule type" value="Genomic_DNA"/>
</dbReference>
<dbReference type="RefSeq" id="WP_011335924.1">
    <property type="nucleotide sequence ID" value="NC_007492.2"/>
</dbReference>
<dbReference type="SMR" id="Q3K6W6"/>
<dbReference type="KEGG" id="pfo:Pfl01_4751"/>
<dbReference type="eggNOG" id="COG3017">
    <property type="taxonomic scope" value="Bacteria"/>
</dbReference>
<dbReference type="HOGENOM" id="CLU_092816_2_1_6"/>
<dbReference type="Proteomes" id="UP000002704">
    <property type="component" value="Chromosome"/>
</dbReference>
<dbReference type="GO" id="GO:0009279">
    <property type="term" value="C:cell outer membrane"/>
    <property type="evidence" value="ECO:0007669"/>
    <property type="project" value="UniProtKB-SubCell"/>
</dbReference>
<dbReference type="GO" id="GO:0044874">
    <property type="term" value="P:lipoprotein localization to outer membrane"/>
    <property type="evidence" value="ECO:0007669"/>
    <property type="project" value="UniProtKB-UniRule"/>
</dbReference>
<dbReference type="GO" id="GO:0015031">
    <property type="term" value="P:protein transport"/>
    <property type="evidence" value="ECO:0007669"/>
    <property type="project" value="UniProtKB-KW"/>
</dbReference>
<dbReference type="CDD" id="cd16326">
    <property type="entry name" value="LolB"/>
    <property type="match status" value="1"/>
</dbReference>
<dbReference type="Gene3D" id="2.50.20.10">
    <property type="entry name" value="Lipoprotein localisation LolA/LolB/LppX"/>
    <property type="match status" value="1"/>
</dbReference>
<dbReference type="HAMAP" id="MF_00233">
    <property type="entry name" value="LolB"/>
    <property type="match status" value="1"/>
</dbReference>
<dbReference type="InterPro" id="IPR029046">
    <property type="entry name" value="LolA/LolB/LppX"/>
</dbReference>
<dbReference type="InterPro" id="IPR004565">
    <property type="entry name" value="OM_lipoprot_LolB"/>
</dbReference>
<dbReference type="NCBIfam" id="TIGR00548">
    <property type="entry name" value="lolB"/>
    <property type="match status" value="1"/>
</dbReference>
<dbReference type="Pfam" id="PF03550">
    <property type="entry name" value="LolB"/>
    <property type="match status" value="1"/>
</dbReference>
<dbReference type="SUPFAM" id="SSF89392">
    <property type="entry name" value="Prokaryotic lipoproteins and lipoprotein localization factors"/>
    <property type="match status" value="1"/>
</dbReference>
<dbReference type="PROSITE" id="PS51257">
    <property type="entry name" value="PROKAR_LIPOPROTEIN"/>
    <property type="match status" value="1"/>
</dbReference>
<keyword id="KW-0998">Cell outer membrane</keyword>
<keyword id="KW-0143">Chaperone</keyword>
<keyword id="KW-0449">Lipoprotein</keyword>
<keyword id="KW-0472">Membrane</keyword>
<keyword id="KW-0564">Palmitate</keyword>
<keyword id="KW-0653">Protein transport</keyword>
<keyword id="KW-0732">Signal</keyword>
<keyword id="KW-0813">Transport</keyword>
<reference key="1">
    <citation type="journal article" date="2009" name="Genome Biol.">
        <title>Genomic and genetic analyses of diversity and plant interactions of Pseudomonas fluorescens.</title>
        <authorList>
            <person name="Silby M.W."/>
            <person name="Cerdeno-Tarraga A.M."/>
            <person name="Vernikos G.S."/>
            <person name="Giddens S.R."/>
            <person name="Jackson R.W."/>
            <person name="Preston G.M."/>
            <person name="Zhang X.-X."/>
            <person name="Moon C.D."/>
            <person name="Gehrig S.M."/>
            <person name="Godfrey S.A.C."/>
            <person name="Knight C.G."/>
            <person name="Malone J.G."/>
            <person name="Robinson Z."/>
            <person name="Spiers A.J."/>
            <person name="Harris S."/>
            <person name="Challis G.L."/>
            <person name="Yaxley A.M."/>
            <person name="Harris D."/>
            <person name="Seeger K."/>
            <person name="Murphy L."/>
            <person name="Rutter S."/>
            <person name="Squares R."/>
            <person name="Quail M.A."/>
            <person name="Saunders E."/>
            <person name="Mavromatis K."/>
            <person name="Brettin T.S."/>
            <person name="Bentley S.D."/>
            <person name="Hothersall J."/>
            <person name="Stephens E."/>
            <person name="Thomas C.M."/>
            <person name="Parkhill J."/>
            <person name="Levy S.B."/>
            <person name="Rainey P.B."/>
            <person name="Thomson N.R."/>
        </authorList>
    </citation>
    <scope>NUCLEOTIDE SEQUENCE [LARGE SCALE GENOMIC DNA]</scope>
    <source>
        <strain>Pf0-1</strain>
    </source>
</reference>
<sequence length="205" mass="22728">MFLRHVIVFSFIALLAGCAGFGARESVEGHGNPAQWAANKQHLTGLDGWQIDGKIGIRAPKDSGSGTLFWLQRQDYYDIRLSGPLGRGAARLTGRPGAVSLEVANQGRYEAPTPEALVEEQLGWKLPVSHLAWWVRGLPAPDSKSRLTLDGNSRLANLDQDGWQVEYLSYAEQNGYWLPERIKLHGSDLDVTLVIKTWQPRKLGQ</sequence>
<organism>
    <name type="scientific">Pseudomonas fluorescens (strain Pf0-1)</name>
    <dbReference type="NCBI Taxonomy" id="205922"/>
    <lineage>
        <taxon>Bacteria</taxon>
        <taxon>Pseudomonadati</taxon>
        <taxon>Pseudomonadota</taxon>
        <taxon>Gammaproteobacteria</taxon>
        <taxon>Pseudomonadales</taxon>
        <taxon>Pseudomonadaceae</taxon>
        <taxon>Pseudomonas</taxon>
    </lineage>
</organism>